<feature type="chain" id="PRO_0000208184" description="Probable 1-acyl-sn-glycerol-3-phosphate acyltransferase 5">
    <location>
        <begin position="1"/>
        <end position="375"/>
    </location>
</feature>
<feature type="transmembrane region" description="Helical" evidence="2">
    <location>
        <begin position="21"/>
        <end position="41"/>
    </location>
</feature>
<feature type="transmembrane region" description="Helical" evidence="2">
    <location>
        <begin position="57"/>
        <end position="77"/>
    </location>
</feature>
<feature type="transmembrane region" description="Helical" evidence="2">
    <location>
        <begin position="312"/>
        <end position="332"/>
    </location>
</feature>
<feature type="transmembrane region" description="Helical" evidence="2">
    <location>
        <begin position="337"/>
        <end position="357"/>
    </location>
</feature>
<feature type="short sequence motif" description="HXXXXD motif">
    <location>
        <begin position="100"/>
        <end position="105"/>
    </location>
</feature>
<reference key="1">
    <citation type="journal article" date="2000" name="DNA Res.">
        <title>Structural analysis of Arabidopsis thaliana chromosome 3. II. Sequence features of the 4,251,695 bp regions covered by 90 P1, TAC and BAC clones.</title>
        <authorList>
            <person name="Kaneko T."/>
            <person name="Katoh T."/>
            <person name="Sato S."/>
            <person name="Nakamura Y."/>
            <person name="Asamizu E."/>
            <person name="Tabata S."/>
        </authorList>
    </citation>
    <scope>NUCLEOTIDE SEQUENCE [LARGE SCALE GENOMIC DNA]</scope>
    <source>
        <strain>cv. Columbia</strain>
    </source>
</reference>
<reference key="2">
    <citation type="journal article" date="2017" name="Plant J.">
        <title>Araport11: a complete reannotation of the Arabidopsis thaliana reference genome.</title>
        <authorList>
            <person name="Cheng C.Y."/>
            <person name="Krishnakumar V."/>
            <person name="Chan A.P."/>
            <person name="Thibaud-Nissen F."/>
            <person name="Schobel S."/>
            <person name="Town C.D."/>
        </authorList>
    </citation>
    <scope>GENOME REANNOTATION</scope>
    <source>
        <strain>cv. Columbia</strain>
    </source>
</reference>
<reference key="3">
    <citation type="journal article" date="2003" name="Science">
        <title>Empirical analysis of transcriptional activity in the Arabidopsis genome.</title>
        <authorList>
            <person name="Yamada K."/>
            <person name="Lim J."/>
            <person name="Dale J.M."/>
            <person name="Chen H."/>
            <person name="Shinn P."/>
            <person name="Palm C.J."/>
            <person name="Southwick A.M."/>
            <person name="Wu H.C."/>
            <person name="Kim C.J."/>
            <person name="Nguyen M."/>
            <person name="Pham P.K."/>
            <person name="Cheuk R.F."/>
            <person name="Karlin-Newmann G."/>
            <person name="Liu S.X."/>
            <person name="Lam B."/>
            <person name="Sakano H."/>
            <person name="Wu T."/>
            <person name="Yu G."/>
            <person name="Miranda M."/>
            <person name="Quach H.L."/>
            <person name="Tripp M."/>
            <person name="Chang C.H."/>
            <person name="Lee J.M."/>
            <person name="Toriumi M.J."/>
            <person name="Chan M.M."/>
            <person name="Tang C.C."/>
            <person name="Onodera C.S."/>
            <person name="Deng J.M."/>
            <person name="Akiyama K."/>
            <person name="Ansari Y."/>
            <person name="Arakawa T."/>
            <person name="Banh J."/>
            <person name="Banno F."/>
            <person name="Bowser L."/>
            <person name="Brooks S.Y."/>
            <person name="Carninci P."/>
            <person name="Chao Q."/>
            <person name="Choy N."/>
            <person name="Enju A."/>
            <person name="Goldsmith A.D."/>
            <person name="Gurjal M."/>
            <person name="Hansen N.F."/>
            <person name="Hayashizaki Y."/>
            <person name="Johnson-Hopson C."/>
            <person name="Hsuan V.W."/>
            <person name="Iida K."/>
            <person name="Karnes M."/>
            <person name="Khan S."/>
            <person name="Koesema E."/>
            <person name="Ishida J."/>
            <person name="Jiang P.X."/>
            <person name="Jones T."/>
            <person name="Kawai J."/>
            <person name="Kamiya A."/>
            <person name="Meyers C."/>
            <person name="Nakajima M."/>
            <person name="Narusaka M."/>
            <person name="Seki M."/>
            <person name="Sakurai T."/>
            <person name="Satou M."/>
            <person name="Tamse R."/>
            <person name="Vaysberg M."/>
            <person name="Wallender E.K."/>
            <person name="Wong C."/>
            <person name="Yamamura Y."/>
            <person name="Yuan S."/>
            <person name="Shinozaki K."/>
            <person name="Davis R.W."/>
            <person name="Theologis A."/>
            <person name="Ecker J.R."/>
        </authorList>
    </citation>
    <scope>NUCLEOTIDE SEQUENCE [LARGE SCALE MRNA]</scope>
    <source>
        <strain>cv. Columbia</strain>
    </source>
</reference>
<reference key="4">
    <citation type="journal article" date="2005" name="Plant Cell">
        <title>Ubiquitous and endoplasmic reticulum-located lysophosphatidyl acyltransferase, LPAT2, is essential for female but not male gametophyte development in Arabidopsis.</title>
        <authorList>
            <person name="Kim H.U."/>
            <person name="Li Y."/>
            <person name="Huang A.H.C."/>
        </authorList>
    </citation>
    <scope>TISSUE SPECIFICITY</scope>
</reference>
<sequence>MEKKSVPNSDKLSLIRVLRGIICLMVLVSTAFMMLIFWGFLSAVVLRLFSIRYSRKCVSFFFGSWLALWPFLFEKINKTKVIFSGDKVPCEDRVLLIANHRTEVDWMYFWDLALRKGQIGNIKYVLKSSLMKLPLFGWAFHLFEFIPVERRWEVDEANLRQIVSSFKDPRDALWLALFPEGTDYTEAKCQRSKKFAAENGLPILNNVLLPRTKGFVSCLQELSCSLDAVYDVTIGYKTRCPSFLDNVYGIEPSEVHIHIRRINLTQIPNQEKDINAWLMNTFQLKDQLLNDFYSNGHFPNEGTEKEFNTKKYLINCLAVIAFTTICTHLTFFSSMIWFRIYVSLACVYLTSATHFNLRSVPLVETAKNSLKLVNK</sequence>
<evidence type="ECO:0000250" key="1"/>
<evidence type="ECO:0000255" key="2"/>
<evidence type="ECO:0000269" key="3">
    <source>
    </source>
</evidence>
<evidence type="ECO:0000305" key="4"/>
<comment type="function">
    <text evidence="1">May convert lysophosphatidic acid (LPA) into phosphatidic acid by incorporating acyl moiety at the 2 position (By similarity). Has no activity when expressed in bacteria or yeast.</text>
</comment>
<comment type="catalytic activity">
    <reaction>
        <text>a 1-acyl-sn-glycero-3-phosphate + an acyl-CoA = a 1,2-diacyl-sn-glycero-3-phosphate + CoA</text>
        <dbReference type="Rhea" id="RHEA:19709"/>
        <dbReference type="ChEBI" id="CHEBI:57287"/>
        <dbReference type="ChEBI" id="CHEBI:57970"/>
        <dbReference type="ChEBI" id="CHEBI:58342"/>
        <dbReference type="ChEBI" id="CHEBI:58608"/>
        <dbReference type="EC" id="2.3.1.51"/>
    </reaction>
</comment>
<comment type="pathway">
    <text>Phospholipid metabolism; CDP-diacylglycerol biosynthesis; CDP-diacylglycerol from sn-glycerol 3-phosphate: step 2/3.</text>
</comment>
<comment type="subcellular location">
    <subcellularLocation>
        <location evidence="4">Membrane</location>
        <topology evidence="4">Multi-pass membrane protein</topology>
    </subcellularLocation>
</comment>
<comment type="alternative products">
    <event type="alternative splicing"/>
    <isoform>
        <id>Q9LHN4-1</id>
        <name>1</name>
        <sequence type="displayed"/>
    </isoform>
    <text>A number of isoforms are produced. According to EST sequences.</text>
</comment>
<comment type="tissue specificity">
    <text evidence="3">Widely expressed at low level.</text>
</comment>
<comment type="domain">
    <text evidence="1">The HXXXXD motif is essential for acyltransferase activity and may constitute the binding site for the phosphate moiety of the glycerol-3-phosphate.</text>
</comment>
<comment type="similarity">
    <text evidence="4">Belongs to the 1-acyl-sn-glycerol-3-phosphate acyltransferase family.</text>
</comment>
<organism>
    <name type="scientific">Arabidopsis thaliana</name>
    <name type="common">Mouse-ear cress</name>
    <dbReference type="NCBI Taxonomy" id="3702"/>
    <lineage>
        <taxon>Eukaryota</taxon>
        <taxon>Viridiplantae</taxon>
        <taxon>Streptophyta</taxon>
        <taxon>Embryophyta</taxon>
        <taxon>Tracheophyta</taxon>
        <taxon>Spermatophyta</taxon>
        <taxon>Magnoliopsida</taxon>
        <taxon>eudicotyledons</taxon>
        <taxon>Gunneridae</taxon>
        <taxon>Pentapetalae</taxon>
        <taxon>rosids</taxon>
        <taxon>malvids</taxon>
        <taxon>Brassicales</taxon>
        <taxon>Brassicaceae</taxon>
        <taxon>Camelineae</taxon>
        <taxon>Arabidopsis</taxon>
    </lineage>
</organism>
<keyword id="KW-0012">Acyltransferase</keyword>
<keyword id="KW-0025">Alternative splicing</keyword>
<keyword id="KW-0444">Lipid biosynthesis</keyword>
<keyword id="KW-0443">Lipid metabolism</keyword>
<keyword id="KW-0472">Membrane</keyword>
<keyword id="KW-0594">Phospholipid biosynthesis</keyword>
<keyword id="KW-1208">Phospholipid metabolism</keyword>
<keyword id="KW-1185">Reference proteome</keyword>
<keyword id="KW-0808">Transferase</keyword>
<keyword id="KW-0812">Transmembrane</keyword>
<keyword id="KW-1133">Transmembrane helix</keyword>
<name>LPAT5_ARATH</name>
<dbReference type="EC" id="2.3.1.51"/>
<dbReference type="EMBL" id="AP002039">
    <property type="protein sequence ID" value="BAB03094.1"/>
    <property type="molecule type" value="Genomic_DNA"/>
</dbReference>
<dbReference type="EMBL" id="CP002686">
    <property type="protein sequence ID" value="AEE76155.1"/>
    <property type="molecule type" value="Genomic_DNA"/>
</dbReference>
<dbReference type="EMBL" id="CP002686">
    <property type="protein sequence ID" value="AEE76156.1"/>
    <property type="molecule type" value="Genomic_DNA"/>
</dbReference>
<dbReference type="EMBL" id="CP002686">
    <property type="protein sequence ID" value="AEE76157.1"/>
    <property type="molecule type" value="Genomic_DNA"/>
</dbReference>
<dbReference type="EMBL" id="CP002686">
    <property type="protein sequence ID" value="AEE76158.1"/>
    <property type="molecule type" value="Genomic_DNA"/>
</dbReference>
<dbReference type="EMBL" id="AY099849">
    <property type="protein sequence ID" value="AAM20700.1"/>
    <property type="molecule type" value="mRNA"/>
</dbReference>
<dbReference type="EMBL" id="BT008462">
    <property type="protein sequence ID" value="AAP37821.1"/>
    <property type="molecule type" value="mRNA"/>
</dbReference>
<dbReference type="RefSeq" id="NP_001030724.2">
    <molecule id="Q9LHN4-1"/>
    <property type="nucleotide sequence ID" value="NM_001035647.3"/>
</dbReference>
<dbReference type="RefSeq" id="NP_001078183.1">
    <molecule id="Q9LHN4-1"/>
    <property type="nucleotide sequence ID" value="NM_001084714.1"/>
</dbReference>
<dbReference type="RefSeq" id="NP_188515.1">
    <molecule id="Q9LHN4-1"/>
    <property type="nucleotide sequence ID" value="NM_112771.5"/>
</dbReference>
<dbReference type="RefSeq" id="NP_974335.1">
    <molecule id="Q9LHN4-1"/>
    <property type="nucleotide sequence ID" value="NM_202606.2"/>
</dbReference>
<dbReference type="FunCoup" id="Q9LHN4">
    <property type="interactions" value="2062"/>
</dbReference>
<dbReference type="STRING" id="3702.Q9LHN4"/>
<dbReference type="PaxDb" id="3702-AT3G18850.2"/>
<dbReference type="ProteomicsDB" id="238520">
    <molecule id="Q9LHN4-1"/>
</dbReference>
<dbReference type="EnsemblPlants" id="AT3G18850.1">
    <molecule id="Q9LHN4-1"/>
    <property type="protein sequence ID" value="AT3G18850.1"/>
    <property type="gene ID" value="AT3G18850"/>
</dbReference>
<dbReference type="EnsemblPlants" id="AT3G18850.2">
    <molecule id="Q9LHN4-1"/>
    <property type="protein sequence ID" value="AT3G18850.2"/>
    <property type="gene ID" value="AT3G18850"/>
</dbReference>
<dbReference type="EnsemblPlants" id="AT3G18850.3">
    <molecule id="Q9LHN4-1"/>
    <property type="protein sequence ID" value="AT3G18850.3"/>
    <property type="gene ID" value="AT3G18850"/>
</dbReference>
<dbReference type="EnsemblPlants" id="AT3G18850.4">
    <molecule id="Q9LHN4-1"/>
    <property type="protein sequence ID" value="AT3G18850.4"/>
    <property type="gene ID" value="AT3G18850"/>
</dbReference>
<dbReference type="GeneID" id="821418"/>
<dbReference type="Gramene" id="AT3G18850.1">
    <molecule id="Q9LHN4-1"/>
    <property type="protein sequence ID" value="AT3G18850.1"/>
    <property type="gene ID" value="AT3G18850"/>
</dbReference>
<dbReference type="Gramene" id="AT3G18850.2">
    <molecule id="Q9LHN4-1"/>
    <property type="protein sequence ID" value="AT3G18850.2"/>
    <property type="gene ID" value="AT3G18850"/>
</dbReference>
<dbReference type="Gramene" id="AT3G18850.3">
    <molecule id="Q9LHN4-1"/>
    <property type="protein sequence ID" value="AT3G18850.3"/>
    <property type="gene ID" value="AT3G18850"/>
</dbReference>
<dbReference type="Gramene" id="AT3G18850.4">
    <molecule id="Q9LHN4-1"/>
    <property type="protein sequence ID" value="AT3G18850.4"/>
    <property type="gene ID" value="AT3G18850"/>
</dbReference>
<dbReference type="KEGG" id="ath:AT3G18850"/>
<dbReference type="Araport" id="AT3G18850"/>
<dbReference type="TAIR" id="AT3G18850">
    <property type="gene designation" value="LPAT5"/>
</dbReference>
<dbReference type="eggNOG" id="KOG1505">
    <property type="taxonomic scope" value="Eukaryota"/>
</dbReference>
<dbReference type="InParanoid" id="Q9LHN4"/>
<dbReference type="OMA" id="HRSTVDW"/>
<dbReference type="PhylomeDB" id="Q9LHN4"/>
<dbReference type="BioCyc" id="ARA:AT3G18850-MONOMER"/>
<dbReference type="BRENDA" id="2.3.1.51">
    <property type="organism ID" value="399"/>
</dbReference>
<dbReference type="UniPathway" id="UPA00557">
    <property type="reaction ID" value="UER00613"/>
</dbReference>
<dbReference type="PRO" id="PR:Q9LHN4"/>
<dbReference type="Proteomes" id="UP000006548">
    <property type="component" value="Chromosome 3"/>
</dbReference>
<dbReference type="ExpressionAtlas" id="Q9LHN4">
    <property type="expression patterns" value="baseline and differential"/>
</dbReference>
<dbReference type="GO" id="GO:0016020">
    <property type="term" value="C:membrane"/>
    <property type="evidence" value="ECO:0007669"/>
    <property type="project" value="UniProtKB-SubCell"/>
</dbReference>
<dbReference type="GO" id="GO:0003841">
    <property type="term" value="F:1-acylglycerol-3-phosphate O-acyltransferase activity"/>
    <property type="evidence" value="ECO:0007669"/>
    <property type="project" value="UniProtKB-EC"/>
</dbReference>
<dbReference type="GO" id="GO:0016024">
    <property type="term" value="P:CDP-diacylglycerol biosynthetic process"/>
    <property type="evidence" value="ECO:0007669"/>
    <property type="project" value="UniProtKB-UniPathway"/>
</dbReference>
<dbReference type="CDD" id="cd07990">
    <property type="entry name" value="LPLAT_LCLAT1-like"/>
    <property type="match status" value="1"/>
</dbReference>
<dbReference type="InterPro" id="IPR032098">
    <property type="entry name" value="Acyltransf_C"/>
</dbReference>
<dbReference type="InterPro" id="IPR002123">
    <property type="entry name" value="Plipid/glycerol_acylTrfase"/>
</dbReference>
<dbReference type="PANTHER" id="PTHR10983:SF74">
    <property type="entry name" value="1-ACYL-SN-GLYCEROL-3-PHOSPHATE ACYLTRANSFERASE 5-RELATED"/>
    <property type="match status" value="1"/>
</dbReference>
<dbReference type="PANTHER" id="PTHR10983">
    <property type="entry name" value="1-ACYLGLYCEROL-3-PHOSPHATE ACYLTRANSFERASE-RELATED"/>
    <property type="match status" value="1"/>
</dbReference>
<dbReference type="Pfam" id="PF16076">
    <property type="entry name" value="Acyltransf_C"/>
    <property type="match status" value="1"/>
</dbReference>
<dbReference type="Pfam" id="PF01553">
    <property type="entry name" value="Acyltransferase"/>
    <property type="match status" value="1"/>
</dbReference>
<dbReference type="SMART" id="SM00563">
    <property type="entry name" value="PlsC"/>
    <property type="match status" value="1"/>
</dbReference>
<dbReference type="SUPFAM" id="SSF69593">
    <property type="entry name" value="Glycerol-3-phosphate (1)-acyltransferase"/>
    <property type="match status" value="1"/>
</dbReference>
<protein>
    <recommendedName>
        <fullName>Probable 1-acyl-sn-glycerol-3-phosphate acyltransferase 5</fullName>
        <ecNumber>2.3.1.51</ecNumber>
    </recommendedName>
    <alternativeName>
        <fullName>Lysophosphatidyl acyltransferase 5</fullName>
    </alternativeName>
</protein>
<proteinExistence type="evidence at transcript level"/>
<gene>
    <name type="primary">LPAT5</name>
    <name type="synonym">LPAAT5</name>
    <name type="ordered locus">At3g18850</name>
    <name type="ORF">MCB22.2</name>
</gene>
<accession>Q9LHN4</accession>
<accession>Q2V3U6</accession>